<feature type="chain" id="PRO_0000284304" description="Endoribonuclease YbeY">
    <location>
        <begin position="1"/>
        <end position="153"/>
    </location>
</feature>
<feature type="binding site" evidence="1">
    <location>
        <position position="114"/>
    </location>
    <ligand>
        <name>Zn(2+)</name>
        <dbReference type="ChEBI" id="CHEBI:29105"/>
        <note>catalytic</note>
    </ligand>
</feature>
<feature type="binding site" evidence="1">
    <location>
        <position position="118"/>
    </location>
    <ligand>
        <name>Zn(2+)</name>
        <dbReference type="ChEBI" id="CHEBI:29105"/>
        <note>catalytic</note>
    </ligand>
</feature>
<feature type="binding site" evidence="1">
    <location>
        <position position="124"/>
    </location>
    <ligand>
        <name>Zn(2+)</name>
        <dbReference type="ChEBI" id="CHEBI:29105"/>
        <note>catalytic</note>
    </ligand>
</feature>
<evidence type="ECO:0000255" key="1">
    <source>
        <dbReference type="HAMAP-Rule" id="MF_00009"/>
    </source>
</evidence>
<sequence>MSLSLDLDLQIAVDSNQLPSQADFETWVRTALGNTLDTAELTIRLVEIAESQSLNHDYRGKDKPTNVLSFPFEAPPGMELPLLGDLVICVAVVEQEALEQNKPLQAHWAHMVIHGCLHLLGYDHIIDQEAEEMESLETQLIEGLGFSNPYKEA</sequence>
<dbReference type="EC" id="3.1.-.-" evidence="1"/>
<dbReference type="EMBL" id="CP000302">
    <property type="protein sequence ID" value="ABE54102.1"/>
    <property type="molecule type" value="Genomic_DNA"/>
</dbReference>
<dbReference type="RefSeq" id="WP_011495267.1">
    <property type="nucleotide sequence ID" value="NC_007954.1"/>
</dbReference>
<dbReference type="SMR" id="Q12R24"/>
<dbReference type="STRING" id="318161.Sden_0813"/>
<dbReference type="KEGG" id="sdn:Sden_0813"/>
<dbReference type="eggNOG" id="COG0319">
    <property type="taxonomic scope" value="Bacteria"/>
</dbReference>
<dbReference type="HOGENOM" id="CLU_106710_0_1_6"/>
<dbReference type="OrthoDB" id="9807740at2"/>
<dbReference type="Proteomes" id="UP000001982">
    <property type="component" value="Chromosome"/>
</dbReference>
<dbReference type="GO" id="GO:0005737">
    <property type="term" value="C:cytoplasm"/>
    <property type="evidence" value="ECO:0007669"/>
    <property type="project" value="UniProtKB-SubCell"/>
</dbReference>
<dbReference type="GO" id="GO:0004222">
    <property type="term" value="F:metalloendopeptidase activity"/>
    <property type="evidence" value="ECO:0007669"/>
    <property type="project" value="InterPro"/>
</dbReference>
<dbReference type="GO" id="GO:0004521">
    <property type="term" value="F:RNA endonuclease activity"/>
    <property type="evidence" value="ECO:0007669"/>
    <property type="project" value="UniProtKB-UniRule"/>
</dbReference>
<dbReference type="GO" id="GO:0008270">
    <property type="term" value="F:zinc ion binding"/>
    <property type="evidence" value="ECO:0007669"/>
    <property type="project" value="UniProtKB-UniRule"/>
</dbReference>
<dbReference type="GO" id="GO:0006364">
    <property type="term" value="P:rRNA processing"/>
    <property type="evidence" value="ECO:0007669"/>
    <property type="project" value="UniProtKB-UniRule"/>
</dbReference>
<dbReference type="Gene3D" id="3.40.390.30">
    <property type="entry name" value="Metalloproteases ('zincins'), catalytic domain"/>
    <property type="match status" value="1"/>
</dbReference>
<dbReference type="HAMAP" id="MF_00009">
    <property type="entry name" value="Endoribonucl_YbeY"/>
    <property type="match status" value="1"/>
</dbReference>
<dbReference type="InterPro" id="IPR023091">
    <property type="entry name" value="MetalPrtase_cat_dom_sf_prd"/>
</dbReference>
<dbReference type="InterPro" id="IPR002036">
    <property type="entry name" value="YbeY"/>
</dbReference>
<dbReference type="InterPro" id="IPR020549">
    <property type="entry name" value="YbeY_CS"/>
</dbReference>
<dbReference type="NCBIfam" id="TIGR00043">
    <property type="entry name" value="rRNA maturation RNase YbeY"/>
    <property type="match status" value="1"/>
</dbReference>
<dbReference type="PANTHER" id="PTHR46986">
    <property type="entry name" value="ENDORIBONUCLEASE YBEY, CHLOROPLASTIC"/>
    <property type="match status" value="1"/>
</dbReference>
<dbReference type="PANTHER" id="PTHR46986:SF1">
    <property type="entry name" value="ENDORIBONUCLEASE YBEY, CHLOROPLASTIC"/>
    <property type="match status" value="1"/>
</dbReference>
<dbReference type="Pfam" id="PF02130">
    <property type="entry name" value="YbeY"/>
    <property type="match status" value="1"/>
</dbReference>
<dbReference type="SUPFAM" id="SSF55486">
    <property type="entry name" value="Metalloproteases ('zincins'), catalytic domain"/>
    <property type="match status" value="1"/>
</dbReference>
<dbReference type="PROSITE" id="PS01306">
    <property type="entry name" value="UPF0054"/>
    <property type="match status" value="1"/>
</dbReference>
<gene>
    <name evidence="1" type="primary">ybeY</name>
    <name type="ordered locus">Sden_0813</name>
</gene>
<keyword id="KW-0963">Cytoplasm</keyword>
<keyword id="KW-0255">Endonuclease</keyword>
<keyword id="KW-0378">Hydrolase</keyword>
<keyword id="KW-0479">Metal-binding</keyword>
<keyword id="KW-0540">Nuclease</keyword>
<keyword id="KW-1185">Reference proteome</keyword>
<keyword id="KW-0690">Ribosome biogenesis</keyword>
<keyword id="KW-0698">rRNA processing</keyword>
<keyword id="KW-0862">Zinc</keyword>
<comment type="function">
    <text evidence="1">Single strand-specific metallo-endoribonuclease involved in late-stage 70S ribosome quality control and in maturation of the 3' terminus of the 16S rRNA.</text>
</comment>
<comment type="cofactor">
    <cofactor evidence="1">
        <name>Zn(2+)</name>
        <dbReference type="ChEBI" id="CHEBI:29105"/>
    </cofactor>
    <text evidence="1">Binds 1 zinc ion.</text>
</comment>
<comment type="subcellular location">
    <subcellularLocation>
        <location evidence="1">Cytoplasm</location>
    </subcellularLocation>
</comment>
<comment type="similarity">
    <text evidence="1">Belongs to the endoribonuclease YbeY family.</text>
</comment>
<protein>
    <recommendedName>
        <fullName evidence="1">Endoribonuclease YbeY</fullName>
        <ecNumber evidence="1">3.1.-.-</ecNumber>
    </recommendedName>
</protein>
<name>YBEY_SHEDO</name>
<proteinExistence type="inferred from homology"/>
<accession>Q12R24</accession>
<reference key="1">
    <citation type="submission" date="2006-03" db="EMBL/GenBank/DDBJ databases">
        <title>Complete sequence of Shewanella denitrificans OS217.</title>
        <authorList>
            <consortium name="US DOE Joint Genome Institute"/>
            <person name="Copeland A."/>
            <person name="Lucas S."/>
            <person name="Lapidus A."/>
            <person name="Barry K."/>
            <person name="Detter J.C."/>
            <person name="Glavina del Rio T."/>
            <person name="Hammon N."/>
            <person name="Israni S."/>
            <person name="Dalin E."/>
            <person name="Tice H."/>
            <person name="Pitluck S."/>
            <person name="Brettin T."/>
            <person name="Bruce D."/>
            <person name="Han C."/>
            <person name="Tapia R."/>
            <person name="Gilna P."/>
            <person name="Kiss H."/>
            <person name="Schmutz J."/>
            <person name="Larimer F."/>
            <person name="Land M."/>
            <person name="Hauser L."/>
            <person name="Kyrpides N."/>
            <person name="Lykidis A."/>
            <person name="Richardson P."/>
        </authorList>
    </citation>
    <scope>NUCLEOTIDE SEQUENCE [LARGE SCALE GENOMIC DNA]</scope>
    <source>
        <strain>OS217 / ATCC BAA-1090 / DSM 15013</strain>
    </source>
</reference>
<organism>
    <name type="scientific">Shewanella denitrificans (strain OS217 / ATCC BAA-1090 / DSM 15013)</name>
    <dbReference type="NCBI Taxonomy" id="318161"/>
    <lineage>
        <taxon>Bacteria</taxon>
        <taxon>Pseudomonadati</taxon>
        <taxon>Pseudomonadota</taxon>
        <taxon>Gammaproteobacteria</taxon>
        <taxon>Alteromonadales</taxon>
        <taxon>Shewanellaceae</taxon>
        <taxon>Shewanella</taxon>
    </lineage>
</organism>